<accession>A0LHQ3</accession>
<name>PUR7_SYNFM</name>
<sequence length="301" mass="33813">MSGSPDLVLETDFPGLKLLNRGKVRDIYDLGDSLLIVATDRISAFDVIMPNPVPDKGRILTRITEFWLRFLSDVTENHLISSDVSRYPEQCRPYERVLAGRSMWVKKARVFPVECIVRGYLAGSGWEDYRKTGQVCGIALPAGLQEAQQLPEPIFTPSTKATLGEHDENISFDAMAAAIGEEMAQGVRDVTIKVYLKASSYARQRGIILADTKFEFGLVEGRLTLVDEVLTPDSSRFWPADRYRVGSSPESFDKQYLRDYLVRSGWKKTDPPPVLPPDVVENTRKRYLEALERLSGHGLEG</sequence>
<gene>
    <name evidence="1" type="primary">purC</name>
    <name type="ordered locus">Sfum_1263</name>
</gene>
<proteinExistence type="inferred from homology"/>
<comment type="catalytic activity">
    <reaction evidence="1">
        <text>5-amino-1-(5-phospho-D-ribosyl)imidazole-4-carboxylate + L-aspartate + ATP = (2S)-2-[5-amino-1-(5-phospho-beta-D-ribosyl)imidazole-4-carboxamido]succinate + ADP + phosphate + 2 H(+)</text>
        <dbReference type="Rhea" id="RHEA:22628"/>
        <dbReference type="ChEBI" id="CHEBI:15378"/>
        <dbReference type="ChEBI" id="CHEBI:29991"/>
        <dbReference type="ChEBI" id="CHEBI:30616"/>
        <dbReference type="ChEBI" id="CHEBI:43474"/>
        <dbReference type="ChEBI" id="CHEBI:58443"/>
        <dbReference type="ChEBI" id="CHEBI:77657"/>
        <dbReference type="ChEBI" id="CHEBI:456216"/>
        <dbReference type="EC" id="6.3.2.6"/>
    </reaction>
</comment>
<comment type="pathway">
    <text evidence="1">Purine metabolism; IMP biosynthesis via de novo pathway; 5-amino-1-(5-phospho-D-ribosyl)imidazole-4-carboxamide from 5-amino-1-(5-phospho-D-ribosyl)imidazole-4-carboxylate: step 1/2.</text>
</comment>
<comment type="similarity">
    <text evidence="1">Belongs to the SAICAR synthetase family.</text>
</comment>
<dbReference type="EC" id="6.3.2.6" evidence="1"/>
<dbReference type="EMBL" id="CP000478">
    <property type="protein sequence ID" value="ABK16955.1"/>
    <property type="molecule type" value="Genomic_DNA"/>
</dbReference>
<dbReference type="RefSeq" id="WP_011698126.1">
    <property type="nucleotide sequence ID" value="NC_008554.1"/>
</dbReference>
<dbReference type="SMR" id="A0LHQ3"/>
<dbReference type="FunCoup" id="A0LHQ3">
    <property type="interactions" value="485"/>
</dbReference>
<dbReference type="STRING" id="335543.Sfum_1263"/>
<dbReference type="KEGG" id="sfu:Sfum_1263"/>
<dbReference type="eggNOG" id="COG0152">
    <property type="taxonomic scope" value="Bacteria"/>
</dbReference>
<dbReference type="HOGENOM" id="CLU_045637_0_0_7"/>
<dbReference type="InParanoid" id="A0LHQ3"/>
<dbReference type="OrthoDB" id="9801549at2"/>
<dbReference type="UniPathway" id="UPA00074">
    <property type="reaction ID" value="UER00131"/>
</dbReference>
<dbReference type="Proteomes" id="UP000001784">
    <property type="component" value="Chromosome"/>
</dbReference>
<dbReference type="GO" id="GO:0005737">
    <property type="term" value="C:cytoplasm"/>
    <property type="evidence" value="ECO:0007669"/>
    <property type="project" value="TreeGrafter"/>
</dbReference>
<dbReference type="GO" id="GO:0005524">
    <property type="term" value="F:ATP binding"/>
    <property type="evidence" value="ECO:0007669"/>
    <property type="project" value="UniProtKB-KW"/>
</dbReference>
<dbReference type="GO" id="GO:0004639">
    <property type="term" value="F:phosphoribosylaminoimidazolesuccinocarboxamide synthase activity"/>
    <property type="evidence" value="ECO:0007669"/>
    <property type="project" value="UniProtKB-UniRule"/>
</dbReference>
<dbReference type="GO" id="GO:0006189">
    <property type="term" value="P:'de novo' IMP biosynthetic process"/>
    <property type="evidence" value="ECO:0007669"/>
    <property type="project" value="UniProtKB-UniRule"/>
</dbReference>
<dbReference type="CDD" id="cd01414">
    <property type="entry name" value="SAICAR_synt_Sc"/>
    <property type="match status" value="1"/>
</dbReference>
<dbReference type="FunFam" id="3.30.470.20:FF:000015">
    <property type="entry name" value="Phosphoribosylaminoimidazole-succinocarboxamide synthase"/>
    <property type="match status" value="1"/>
</dbReference>
<dbReference type="Gene3D" id="3.30.470.20">
    <property type="entry name" value="ATP-grasp fold, B domain"/>
    <property type="match status" value="1"/>
</dbReference>
<dbReference type="Gene3D" id="3.30.200.20">
    <property type="entry name" value="Phosphorylase Kinase, domain 1"/>
    <property type="match status" value="1"/>
</dbReference>
<dbReference type="HAMAP" id="MF_00137">
    <property type="entry name" value="SAICAR_synth"/>
    <property type="match status" value="1"/>
</dbReference>
<dbReference type="InterPro" id="IPR028923">
    <property type="entry name" value="SAICAR_synt/ADE2_N"/>
</dbReference>
<dbReference type="InterPro" id="IPR001636">
    <property type="entry name" value="SAICAR_synth"/>
</dbReference>
<dbReference type="InterPro" id="IPR018236">
    <property type="entry name" value="SAICAR_synthetase_CS"/>
</dbReference>
<dbReference type="NCBIfam" id="NF010568">
    <property type="entry name" value="PRK13961.1"/>
    <property type="match status" value="1"/>
</dbReference>
<dbReference type="NCBIfam" id="TIGR00081">
    <property type="entry name" value="purC"/>
    <property type="match status" value="1"/>
</dbReference>
<dbReference type="PANTHER" id="PTHR43700">
    <property type="entry name" value="PHOSPHORIBOSYLAMINOIMIDAZOLE-SUCCINOCARBOXAMIDE SYNTHASE"/>
    <property type="match status" value="1"/>
</dbReference>
<dbReference type="PANTHER" id="PTHR43700:SF1">
    <property type="entry name" value="PHOSPHORIBOSYLAMINOIMIDAZOLE-SUCCINOCARBOXAMIDE SYNTHASE"/>
    <property type="match status" value="1"/>
</dbReference>
<dbReference type="Pfam" id="PF01259">
    <property type="entry name" value="SAICAR_synt"/>
    <property type="match status" value="1"/>
</dbReference>
<dbReference type="SUPFAM" id="SSF56104">
    <property type="entry name" value="SAICAR synthase-like"/>
    <property type="match status" value="1"/>
</dbReference>
<dbReference type="PROSITE" id="PS01057">
    <property type="entry name" value="SAICAR_SYNTHETASE_1"/>
    <property type="match status" value="1"/>
</dbReference>
<dbReference type="PROSITE" id="PS01058">
    <property type="entry name" value="SAICAR_SYNTHETASE_2"/>
    <property type="match status" value="1"/>
</dbReference>
<protein>
    <recommendedName>
        <fullName evidence="1">Phosphoribosylaminoimidazole-succinocarboxamide synthase</fullName>
        <ecNumber evidence="1">6.3.2.6</ecNumber>
    </recommendedName>
    <alternativeName>
        <fullName evidence="1">SAICAR synthetase</fullName>
    </alternativeName>
</protein>
<reference key="1">
    <citation type="submission" date="2006-10" db="EMBL/GenBank/DDBJ databases">
        <title>Complete sequence of Syntrophobacter fumaroxidans MPOB.</title>
        <authorList>
            <consortium name="US DOE Joint Genome Institute"/>
            <person name="Copeland A."/>
            <person name="Lucas S."/>
            <person name="Lapidus A."/>
            <person name="Barry K."/>
            <person name="Detter J.C."/>
            <person name="Glavina del Rio T."/>
            <person name="Hammon N."/>
            <person name="Israni S."/>
            <person name="Pitluck S."/>
            <person name="Goltsman E.G."/>
            <person name="Martinez M."/>
            <person name="Schmutz J."/>
            <person name="Larimer F."/>
            <person name="Land M."/>
            <person name="Hauser L."/>
            <person name="Kyrpides N."/>
            <person name="Kim E."/>
            <person name="Boone D.R."/>
            <person name="Brockman F."/>
            <person name="Culley D."/>
            <person name="Ferry J."/>
            <person name="Gunsalus R."/>
            <person name="McInerney M.J."/>
            <person name="Morrison M."/>
            <person name="Plugge C."/>
            <person name="Rohlin L."/>
            <person name="Scholten J."/>
            <person name="Sieber J."/>
            <person name="Stams A.J.M."/>
            <person name="Worm P."/>
            <person name="Henstra A.M."/>
            <person name="Richardson P."/>
        </authorList>
    </citation>
    <scope>NUCLEOTIDE SEQUENCE [LARGE SCALE GENOMIC DNA]</scope>
    <source>
        <strain>DSM 10017 / MPOB</strain>
    </source>
</reference>
<keyword id="KW-0067">ATP-binding</keyword>
<keyword id="KW-0436">Ligase</keyword>
<keyword id="KW-0547">Nucleotide-binding</keyword>
<keyword id="KW-0658">Purine biosynthesis</keyword>
<keyword id="KW-1185">Reference proteome</keyword>
<organism>
    <name type="scientific">Syntrophobacter fumaroxidans (strain DSM 10017 / MPOB)</name>
    <dbReference type="NCBI Taxonomy" id="335543"/>
    <lineage>
        <taxon>Bacteria</taxon>
        <taxon>Pseudomonadati</taxon>
        <taxon>Thermodesulfobacteriota</taxon>
        <taxon>Syntrophobacteria</taxon>
        <taxon>Syntrophobacterales</taxon>
        <taxon>Syntrophobacteraceae</taxon>
        <taxon>Syntrophobacter</taxon>
    </lineage>
</organism>
<evidence type="ECO:0000255" key="1">
    <source>
        <dbReference type="HAMAP-Rule" id="MF_00137"/>
    </source>
</evidence>
<feature type="chain" id="PRO_1000018798" description="Phosphoribosylaminoimidazole-succinocarboxamide synthase">
    <location>
        <begin position="1"/>
        <end position="301"/>
    </location>
</feature>